<feature type="signal peptide" evidence="1">
    <location>
        <begin position="1"/>
        <end position="45"/>
    </location>
</feature>
<feature type="chain" id="PRO_0000006430" description="Cuticle collagen dpy-10">
    <location>
        <begin position="46"/>
        <end position="372"/>
    </location>
</feature>
<feature type="region of interest" description="Disordered" evidence="2">
    <location>
        <begin position="144"/>
        <end position="372"/>
    </location>
</feature>
<feature type="region of interest" description="Triple-helical region">
    <location>
        <begin position="144"/>
        <end position="173"/>
    </location>
</feature>
<feature type="region of interest" description="Triple-helical region">
    <location>
        <begin position="195"/>
        <end position="251"/>
    </location>
</feature>
<feature type="region of interest" description="Triple-helical region">
    <location>
        <begin position="259"/>
        <end position="324"/>
    </location>
</feature>
<feature type="compositionally biased region" description="Pro residues" evidence="2">
    <location>
        <begin position="185"/>
        <end position="196"/>
    </location>
</feature>
<feature type="compositionally biased region" description="Low complexity" evidence="2">
    <location>
        <begin position="197"/>
        <end position="208"/>
    </location>
</feature>
<feature type="compositionally biased region" description="Gly residues" evidence="2">
    <location>
        <begin position="237"/>
        <end position="246"/>
    </location>
</feature>
<feature type="compositionally biased region" description="Gly residues" evidence="2">
    <location>
        <begin position="283"/>
        <end position="292"/>
    </location>
</feature>
<feature type="compositionally biased region" description="Low complexity" evidence="2">
    <location>
        <begin position="293"/>
        <end position="303"/>
    </location>
</feature>
<feature type="compositionally biased region" description="Gly residues" evidence="2">
    <location>
        <begin position="353"/>
        <end position="363"/>
    </location>
</feature>
<feature type="splice variant" id="VSP_007377" description="In isoform a." evidence="4">
    <location>
        <begin position="1"/>
        <end position="21"/>
    </location>
</feature>
<feature type="splice variant" id="VSP_019859" description="In isoform a." evidence="4">
    <location>
        <begin position="69"/>
        <end position="84"/>
    </location>
</feature>
<feature type="mutagenesis site" description="In dpy10(CN64)." evidence="3">
    <original>R</original>
    <variation>C</variation>
    <location>
        <position position="108"/>
    </location>
</feature>
<feature type="mutagenesis site" description="In dpy10(SC48)." evidence="3">
    <original>G</original>
    <variation>E</variation>
    <location>
        <position position="153"/>
    </location>
</feature>
<feature type="mutagenesis site" description="In dpy10(CG37)." evidence="3">
    <original>G</original>
    <variation>E</variation>
    <location>
        <position position="168"/>
    </location>
</feature>
<feature type="mutagenesis site" description="In dpy10(Q291)." evidence="3">
    <original>G</original>
    <variation>R</variation>
    <location>
        <position position="237"/>
    </location>
</feature>
<proteinExistence type="evidence at protein level"/>
<evidence type="ECO:0000255" key="1"/>
<evidence type="ECO:0000256" key="2">
    <source>
        <dbReference type="SAM" id="MobiDB-lite"/>
    </source>
</evidence>
<evidence type="ECO:0000269" key="3">
    <source>
    </source>
</evidence>
<evidence type="ECO:0000305" key="4"/>
<comment type="function">
    <text>Nematode cuticles are composed largely of collagen-like proteins. The cuticle functions both as an exoskeleton and as a barrier to protect the worm from its environment.</text>
</comment>
<comment type="subunit">
    <text>Collagen polypeptide chains are complexed within the cuticle by disulfide bonds and other types of covalent cross-links.</text>
</comment>
<comment type="alternative products">
    <event type="alternative splicing"/>
    <isoform>
        <id>P35800-1</id>
        <name>b</name>
        <sequence type="displayed"/>
    </isoform>
    <isoform>
        <id>P35800-2</id>
        <name>a</name>
        <sequence type="described" ref="VSP_007377 VSP_019859"/>
    </isoform>
</comment>
<comment type="similarity">
    <text evidence="4">Belongs to the cuticular collagen family.</text>
</comment>
<comment type="sequence caution" evidence="4">
    <conflict type="erroneous gene model prediction">
        <sequence resource="EMBL-CDS" id="AAA17395"/>
    </conflict>
</comment>
<keyword id="KW-0025">Alternative splicing</keyword>
<keyword id="KW-0176">Collagen</keyword>
<keyword id="KW-0193">Cuticle</keyword>
<keyword id="KW-1015">Disulfide bond</keyword>
<keyword id="KW-1185">Reference proteome</keyword>
<keyword id="KW-0677">Repeat</keyword>
<keyword id="KW-0732">Signal</keyword>
<organism>
    <name type="scientific">Caenorhabditis elegans</name>
    <dbReference type="NCBI Taxonomy" id="6239"/>
    <lineage>
        <taxon>Eukaryota</taxon>
        <taxon>Metazoa</taxon>
        <taxon>Ecdysozoa</taxon>
        <taxon>Nematoda</taxon>
        <taxon>Chromadorea</taxon>
        <taxon>Rhabditida</taxon>
        <taxon>Rhabditina</taxon>
        <taxon>Rhabditomorpha</taxon>
        <taxon>Rhabditoidea</taxon>
        <taxon>Rhabditidae</taxon>
        <taxon>Peloderinae</taxon>
        <taxon>Caenorhabditis</taxon>
    </lineage>
</organism>
<sequence length="372" mass="38530">MKNNAKEDYRTFSLTTNYSRQMIYRCVTGLQIGFSLFSFIIVCVALPIMYNHVQNTITYVDREMAYCEVRFLYFYCIKFFSTLQRSNDEAALELQYGKMRMTGNRTARGAYGSGASHGFRPTAYGDEITGAPLETECPGCCIPGPPGPRGSSGTPGKPGLPGNAGKPGMPGTTPNQTCPLNQVREPPPCRPCPKGPPGIKGWPGFPGDVGPPGPPGLKGIDGEDGAPGETGPTGPPGYRGGPGAPGDKGPTPEGDLKEGPPGDEGPPGPIGAPGMPGLPGRNGLTGGQGERGWPGVSGESGEPGYPGPEGPMGGQGPPGEPGVCVCQNVDSILLINPGPQPRIRADDYNSDDGYGGSRGGGDRAGYQGYGRK</sequence>
<gene>
    <name type="primary">dpy-10</name>
    <name type="ORF">T14B4.7</name>
</gene>
<name>DPY10_CAEEL</name>
<accession>P35800</accession>
<accession>Q22476</accession>
<dbReference type="EMBL" id="L12692">
    <property type="protein sequence ID" value="AAA17395.2"/>
    <property type="status" value="ALT_SEQ"/>
    <property type="molecule type" value="Genomic_DNA"/>
</dbReference>
<dbReference type="EMBL" id="FO080626">
    <property type="protein sequence ID" value="CCD65275.1"/>
    <property type="molecule type" value="Genomic_DNA"/>
</dbReference>
<dbReference type="EMBL" id="FO080626">
    <property type="protein sequence ID" value="CCD65276.1"/>
    <property type="molecule type" value="Genomic_DNA"/>
</dbReference>
<dbReference type="RefSeq" id="NP_001335511.1">
    <property type="nucleotide sequence ID" value="NM_001348636.1"/>
</dbReference>
<dbReference type="SMR" id="P35800"/>
<dbReference type="BioGRID" id="39444">
    <property type="interactions" value="6"/>
</dbReference>
<dbReference type="FunCoup" id="P35800">
    <property type="interactions" value="769"/>
</dbReference>
<dbReference type="STRING" id="6239.T14B4.7.1"/>
<dbReference type="PaxDb" id="6239-T14B4.7b.1"/>
<dbReference type="PeptideAtlas" id="P35800"/>
<dbReference type="EnsemblMetazoa" id="T14B4.7.1">
    <property type="protein sequence ID" value="T14B4.7.1"/>
    <property type="gene ID" value="WBGene00001072"/>
</dbReference>
<dbReference type="GeneID" id="36805042"/>
<dbReference type="KEGG" id="cel:CELE_T14B4.7"/>
<dbReference type="UCSC" id="T14B4.7a.1">
    <molecule id="P35800-1"/>
    <property type="organism name" value="c. elegans"/>
</dbReference>
<dbReference type="AGR" id="WB:WBGene00001072"/>
<dbReference type="CTD" id="36805042"/>
<dbReference type="WormBase" id="T14B4.7">
    <property type="protein sequence ID" value="CE51880"/>
    <property type="gene ID" value="WBGene00001072"/>
    <property type="gene designation" value="dpy-10"/>
</dbReference>
<dbReference type="eggNOG" id="KOG3544">
    <property type="taxonomic scope" value="Eukaryota"/>
</dbReference>
<dbReference type="GeneTree" id="ENSGT00970000196743"/>
<dbReference type="InParanoid" id="P35800"/>
<dbReference type="OMA" id="QMIYRCV"/>
<dbReference type="OrthoDB" id="8939548at2759"/>
<dbReference type="PRO" id="PR:P35800"/>
<dbReference type="Proteomes" id="UP000001940">
    <property type="component" value="Chromosome II"/>
</dbReference>
<dbReference type="Bgee" id="WBGene00001072">
    <property type="expression patterns" value="Expressed in embryo and 4 other cell types or tissues"/>
</dbReference>
<dbReference type="GO" id="GO:0005581">
    <property type="term" value="C:collagen trimer"/>
    <property type="evidence" value="ECO:0007669"/>
    <property type="project" value="UniProtKB-KW"/>
</dbReference>
<dbReference type="GO" id="GO:0005576">
    <property type="term" value="C:extracellular region"/>
    <property type="evidence" value="ECO:0000303"/>
    <property type="project" value="UniProtKB"/>
</dbReference>
<dbReference type="GO" id="GO:0042329">
    <property type="term" value="F:structural constituent of collagen and cuticulin-based cuticle"/>
    <property type="evidence" value="ECO:0000250"/>
    <property type="project" value="WormBase"/>
</dbReference>
<dbReference type="GO" id="GO:0042302">
    <property type="term" value="F:structural constituent of cuticle"/>
    <property type="evidence" value="ECO:0000303"/>
    <property type="project" value="UniProtKB"/>
</dbReference>
<dbReference type="GO" id="GO:0040002">
    <property type="term" value="P:collagen and cuticulin-based cuticle development"/>
    <property type="evidence" value="ECO:0000303"/>
    <property type="project" value="UniProtKB"/>
</dbReference>
<dbReference type="GO" id="GO:0042338">
    <property type="term" value="P:cuticle development involved in collagen and cuticulin-based cuticle molting cycle"/>
    <property type="evidence" value="ECO:0000315"/>
    <property type="project" value="WormBase"/>
</dbReference>
<dbReference type="GO" id="GO:0040011">
    <property type="term" value="P:locomotion"/>
    <property type="evidence" value="ECO:0000315"/>
    <property type="project" value="WormBase"/>
</dbReference>
<dbReference type="GO" id="GO:0040032">
    <property type="term" value="P:post-embryonic body morphogenesis"/>
    <property type="evidence" value="ECO:0000315"/>
    <property type="project" value="WormBase"/>
</dbReference>
<dbReference type="GO" id="GO:0010468">
    <property type="term" value="P:regulation of gene expression"/>
    <property type="evidence" value="ECO:0000315"/>
    <property type="project" value="UniProtKB"/>
</dbReference>
<dbReference type="InterPro" id="IPR002486">
    <property type="entry name" value="Col_cuticle_N"/>
</dbReference>
<dbReference type="PANTHER" id="PTHR24637">
    <property type="entry name" value="COLLAGEN"/>
    <property type="match status" value="1"/>
</dbReference>
<dbReference type="PANTHER" id="PTHR24637:SF351">
    <property type="entry name" value="CUTICLE COLLAGEN DPY-10"/>
    <property type="match status" value="1"/>
</dbReference>
<dbReference type="Pfam" id="PF01484">
    <property type="entry name" value="Col_cuticle_N"/>
    <property type="match status" value="1"/>
</dbReference>
<reference key="1">
    <citation type="journal article" date="1993" name="Mol. Biol. Cell">
        <title>Molecular and genetic analyses of the Caenorhabditis elegans dpy-2 and dpy-10 collagen genes: a variety of molecular alterations affect organismal morphology.</title>
        <authorList>
            <person name="Levy A.D."/>
            <person name="Yang J."/>
            <person name="Kramer J.M."/>
        </authorList>
    </citation>
    <scope>NUCLEOTIDE SEQUENCE [GENOMIC DNA]</scope>
    <scope>MUTAGENESIS OF ARG-108; GLY-153; GLY-168 AND GLY-237</scope>
    <source>
        <strain>Bristol N2</strain>
    </source>
</reference>
<reference key="2">
    <citation type="journal article" date="1998" name="Science">
        <title>Genome sequence of the nematode C. elegans: a platform for investigating biology.</title>
        <authorList>
            <consortium name="The C. elegans sequencing consortium"/>
        </authorList>
    </citation>
    <scope>NUCLEOTIDE SEQUENCE [LARGE SCALE GENOMIC DNA]</scope>
    <scope>ALTERNATIVE SPLICING</scope>
    <source>
        <strain>Bristol N2</strain>
    </source>
</reference>
<protein>
    <recommendedName>
        <fullName>Cuticle collagen dpy-10</fullName>
    </recommendedName>
    <alternativeName>
        <fullName>Protein dumpy-10</fullName>
    </alternativeName>
</protein>